<dbReference type="EMBL" id="X59956">
    <property type="protein sequence ID" value="CAA42578.1"/>
    <property type="molecule type" value="Genomic_DNA"/>
</dbReference>
<dbReference type="PIR" id="S16896">
    <property type="entry name" value="S16896"/>
</dbReference>
<dbReference type="SMR" id="P24074"/>
<dbReference type="GO" id="GO:0005829">
    <property type="term" value="C:cytosol"/>
    <property type="evidence" value="ECO:0007669"/>
    <property type="project" value="TreeGrafter"/>
</dbReference>
<dbReference type="GO" id="GO:0005524">
    <property type="term" value="F:ATP binding"/>
    <property type="evidence" value="ECO:0007669"/>
    <property type="project" value="UniProtKB-UniRule"/>
</dbReference>
<dbReference type="GO" id="GO:0016887">
    <property type="term" value="F:ATP hydrolysis activity"/>
    <property type="evidence" value="ECO:0007669"/>
    <property type="project" value="InterPro"/>
</dbReference>
<dbReference type="GO" id="GO:0140664">
    <property type="term" value="F:ATP-dependent DNA damage sensor activity"/>
    <property type="evidence" value="ECO:0007669"/>
    <property type="project" value="InterPro"/>
</dbReference>
<dbReference type="GO" id="GO:0003684">
    <property type="term" value="F:damaged DNA binding"/>
    <property type="evidence" value="ECO:0007669"/>
    <property type="project" value="UniProtKB-UniRule"/>
</dbReference>
<dbReference type="GO" id="GO:0003697">
    <property type="term" value="F:single-stranded DNA binding"/>
    <property type="evidence" value="ECO:0007669"/>
    <property type="project" value="UniProtKB-UniRule"/>
</dbReference>
<dbReference type="GO" id="GO:0006310">
    <property type="term" value="P:DNA recombination"/>
    <property type="evidence" value="ECO:0007669"/>
    <property type="project" value="UniProtKB-UniRule"/>
</dbReference>
<dbReference type="GO" id="GO:0006281">
    <property type="term" value="P:DNA repair"/>
    <property type="evidence" value="ECO:0007669"/>
    <property type="project" value="UniProtKB-UniRule"/>
</dbReference>
<dbReference type="GO" id="GO:0009432">
    <property type="term" value="P:SOS response"/>
    <property type="evidence" value="ECO:0007669"/>
    <property type="project" value="UniProtKB-UniRule"/>
</dbReference>
<dbReference type="CDD" id="cd00983">
    <property type="entry name" value="RecA"/>
    <property type="match status" value="1"/>
</dbReference>
<dbReference type="FunFam" id="3.40.50.300:FF:000087">
    <property type="entry name" value="Recombinase RecA"/>
    <property type="match status" value="1"/>
</dbReference>
<dbReference type="Gene3D" id="3.40.50.300">
    <property type="entry name" value="P-loop containing nucleotide triphosphate hydrolases"/>
    <property type="match status" value="1"/>
</dbReference>
<dbReference type="HAMAP" id="MF_00268">
    <property type="entry name" value="RecA"/>
    <property type="match status" value="1"/>
</dbReference>
<dbReference type="InterPro" id="IPR003593">
    <property type="entry name" value="AAA+_ATPase"/>
</dbReference>
<dbReference type="InterPro" id="IPR013765">
    <property type="entry name" value="DNA_recomb/repair_RecA"/>
</dbReference>
<dbReference type="InterPro" id="IPR020584">
    <property type="entry name" value="DNA_recomb/repair_RecA_CS"/>
</dbReference>
<dbReference type="InterPro" id="IPR027417">
    <property type="entry name" value="P-loop_NTPase"/>
</dbReference>
<dbReference type="InterPro" id="IPR049261">
    <property type="entry name" value="RecA-like_C"/>
</dbReference>
<dbReference type="InterPro" id="IPR049428">
    <property type="entry name" value="RecA-like_N"/>
</dbReference>
<dbReference type="InterPro" id="IPR020588">
    <property type="entry name" value="RecA_ATP-bd"/>
</dbReference>
<dbReference type="InterPro" id="IPR023400">
    <property type="entry name" value="RecA_C_sf"/>
</dbReference>
<dbReference type="InterPro" id="IPR020587">
    <property type="entry name" value="RecA_monomer-monomer_interface"/>
</dbReference>
<dbReference type="NCBIfam" id="TIGR02012">
    <property type="entry name" value="tigrfam_recA"/>
    <property type="match status" value="1"/>
</dbReference>
<dbReference type="PANTHER" id="PTHR45900:SF1">
    <property type="entry name" value="MITOCHONDRIAL DNA REPAIR PROTEIN RECA HOMOLOG-RELATED"/>
    <property type="match status" value="1"/>
</dbReference>
<dbReference type="PANTHER" id="PTHR45900">
    <property type="entry name" value="RECA"/>
    <property type="match status" value="1"/>
</dbReference>
<dbReference type="Pfam" id="PF00154">
    <property type="entry name" value="RecA"/>
    <property type="match status" value="1"/>
</dbReference>
<dbReference type="Pfam" id="PF21096">
    <property type="entry name" value="RecA_C"/>
    <property type="match status" value="1"/>
</dbReference>
<dbReference type="PRINTS" id="PR00142">
    <property type="entry name" value="RECA"/>
</dbReference>
<dbReference type="SMART" id="SM00382">
    <property type="entry name" value="AAA"/>
    <property type="match status" value="1"/>
</dbReference>
<dbReference type="SUPFAM" id="SSF52540">
    <property type="entry name" value="P-loop containing nucleoside triphosphate hydrolases"/>
    <property type="match status" value="1"/>
</dbReference>
<dbReference type="SUPFAM" id="SSF54752">
    <property type="entry name" value="RecA protein, C-terminal domain"/>
    <property type="match status" value="1"/>
</dbReference>
<dbReference type="PROSITE" id="PS00321">
    <property type="entry name" value="RECA_1"/>
    <property type="match status" value="1"/>
</dbReference>
<dbReference type="PROSITE" id="PS50162">
    <property type="entry name" value="RECA_2"/>
    <property type="match status" value="1"/>
</dbReference>
<dbReference type="PROSITE" id="PS50163">
    <property type="entry name" value="RECA_3"/>
    <property type="match status" value="1"/>
</dbReference>
<name>RECA_RHILV</name>
<evidence type="ECO:0000255" key="1">
    <source>
        <dbReference type="HAMAP-Rule" id="MF_00268"/>
    </source>
</evidence>
<evidence type="ECO:0000256" key="2">
    <source>
        <dbReference type="SAM" id="MobiDB-lite"/>
    </source>
</evidence>
<organism>
    <name type="scientific">Rhizobium leguminosarum bv. viciae</name>
    <dbReference type="NCBI Taxonomy" id="387"/>
    <lineage>
        <taxon>Bacteria</taxon>
        <taxon>Pseudomonadati</taxon>
        <taxon>Pseudomonadota</taxon>
        <taxon>Alphaproteobacteria</taxon>
        <taxon>Hyphomicrobiales</taxon>
        <taxon>Rhizobiaceae</taxon>
        <taxon>Rhizobium/Agrobacterium group</taxon>
        <taxon>Rhizobium</taxon>
    </lineage>
</organism>
<gene>
    <name evidence="1" type="primary">recA</name>
</gene>
<proteinExistence type="inferred from homology"/>
<keyword id="KW-0067">ATP-binding</keyword>
<keyword id="KW-0963">Cytoplasm</keyword>
<keyword id="KW-0227">DNA damage</keyword>
<keyword id="KW-0233">DNA recombination</keyword>
<keyword id="KW-0234">DNA repair</keyword>
<keyword id="KW-0238">DNA-binding</keyword>
<keyword id="KW-0547">Nucleotide-binding</keyword>
<keyword id="KW-0742">SOS response</keyword>
<reference key="1">
    <citation type="journal article" date="1991" name="Mol. Gen. Genet.">
        <title>Characterization of recA genes and recA mutants of Rhizobium meliloti and Rhizobium leguminosarum biovar viciae.</title>
        <authorList>
            <person name="Selbitschka W."/>
            <person name="Arnold W."/>
            <person name="Priefer U.B."/>
            <person name="Rottschafer T."/>
            <person name="Schmidt M."/>
            <person name="Simon R."/>
            <person name="Puehler A."/>
        </authorList>
    </citation>
    <scope>NUCLEOTIDE SEQUENCE [GENOMIC DNA]</scope>
    <source>
        <strain>VF39</strain>
    </source>
</reference>
<protein>
    <recommendedName>
        <fullName evidence="1">Protein RecA</fullName>
    </recommendedName>
    <alternativeName>
        <fullName evidence="1">Recombinase A</fullName>
    </alternativeName>
</protein>
<accession>P24074</accession>
<comment type="function">
    <text>Can catalyze the hydrolysis of ATP in the presence of single-stranded DNA, the ATP-dependent uptake of single-stranded DNA by duplex DNA, and the ATP-dependent hybridization of homologous single-stranded DNAs. It interacts with LexA causing its activation and leading to its autocatalytic cleavage.</text>
</comment>
<comment type="subcellular location">
    <subcellularLocation>
        <location evidence="1">Cytoplasm</location>
    </subcellularLocation>
</comment>
<comment type="similarity">
    <text evidence="1">Belongs to the RecA family.</text>
</comment>
<sequence>MDKSKALEAALSQIERSFGKGSIMKLGSNENVVEIETISTGSLGLDIALGVGGLPRGRIIEIYGPESSGKTTLALQTIAEAQKKGGICAFVDAEHALDPVYARKLGVDLQNLLISQPDTGEQALEITDTLVRSGRVDVLVVDSVAALTPRAEIEGEMGDTVPGLQARLMSQALRKLTASISKSNTMVIFINQIRMKIGVMFGSPETTTGGNALKFYASVRLDIRRIGAVKEREEVIGNQTRVKVVKNKMAPPFKQVEFDIMYGEGVSKTGELVDLGVKAGIVEKSGAWFSYNSQRLGQGRENAKTFLRDNPDLAREIELSLRQNAGLIADRFLQNGGPDPDDGDGDATAEM</sequence>
<feature type="chain" id="PRO_0000122814" description="Protein RecA">
    <location>
        <begin position="1"/>
        <end position="351"/>
    </location>
</feature>
<feature type="region of interest" description="Disordered" evidence="2">
    <location>
        <begin position="330"/>
        <end position="351"/>
    </location>
</feature>
<feature type="compositionally biased region" description="Acidic residues" evidence="2">
    <location>
        <begin position="339"/>
        <end position="351"/>
    </location>
</feature>
<feature type="binding site" evidence="1">
    <location>
        <begin position="64"/>
        <end position="71"/>
    </location>
    <ligand>
        <name>ATP</name>
        <dbReference type="ChEBI" id="CHEBI:30616"/>
    </ligand>
</feature>